<gene>
    <name type="primary">alp4</name>
    <name type="ORF">SPBC365.15</name>
</gene>
<dbReference type="EMBL" id="CU329671">
    <property type="protein sequence ID" value="CAB44767.1"/>
    <property type="molecule type" value="Genomic_DNA"/>
</dbReference>
<dbReference type="EMBL" id="AB026664">
    <property type="protein sequence ID" value="BAA77269.1"/>
    <property type="molecule type" value="Genomic_DNA"/>
</dbReference>
<dbReference type="PIR" id="T43510">
    <property type="entry name" value="T43510"/>
</dbReference>
<dbReference type="RefSeq" id="NP_596044.1">
    <property type="nucleotide sequence ID" value="NM_001021954.2"/>
</dbReference>
<dbReference type="SMR" id="Q9Y705"/>
<dbReference type="BioGRID" id="276920">
    <property type="interactions" value="22"/>
</dbReference>
<dbReference type="FunCoup" id="Q9Y705">
    <property type="interactions" value="698"/>
</dbReference>
<dbReference type="IntAct" id="Q9Y705">
    <property type="interactions" value="5"/>
</dbReference>
<dbReference type="MINT" id="Q9Y705"/>
<dbReference type="STRING" id="284812.Q9Y705"/>
<dbReference type="iPTMnet" id="Q9Y705"/>
<dbReference type="PaxDb" id="4896-SPBC365.15.1"/>
<dbReference type="EnsemblFungi" id="SPBC365.15.1">
    <property type="protein sequence ID" value="SPBC365.15.1:pep"/>
    <property type="gene ID" value="SPBC365.15"/>
</dbReference>
<dbReference type="GeneID" id="2540392"/>
<dbReference type="KEGG" id="spo:2540392"/>
<dbReference type="PomBase" id="SPBC365.15">
    <property type="gene designation" value="alp4"/>
</dbReference>
<dbReference type="VEuPathDB" id="FungiDB:SPBC365.15"/>
<dbReference type="eggNOG" id="KOG2001">
    <property type="taxonomic scope" value="Eukaryota"/>
</dbReference>
<dbReference type="HOGENOM" id="CLU_007738_0_1_1"/>
<dbReference type="InParanoid" id="Q9Y705"/>
<dbReference type="OMA" id="QNMSGDP"/>
<dbReference type="PhylomeDB" id="Q9Y705"/>
<dbReference type="CD-CODE" id="576F0A76">
    <property type="entry name" value="Centrosome"/>
</dbReference>
<dbReference type="PRO" id="PR:Q9Y705"/>
<dbReference type="Proteomes" id="UP000002485">
    <property type="component" value="Chromosome II"/>
</dbReference>
<dbReference type="GO" id="GO:0032153">
    <property type="term" value="C:cell division site"/>
    <property type="evidence" value="ECO:0007005"/>
    <property type="project" value="PomBase"/>
</dbReference>
<dbReference type="GO" id="GO:0005829">
    <property type="term" value="C:cytosol"/>
    <property type="evidence" value="ECO:0007005"/>
    <property type="project" value="PomBase"/>
</dbReference>
<dbReference type="GO" id="GO:0000923">
    <property type="term" value="C:equatorial microtubule organizing center"/>
    <property type="evidence" value="ECO:0000314"/>
    <property type="project" value="PomBase"/>
</dbReference>
<dbReference type="GO" id="GO:0000930">
    <property type="term" value="C:gamma-tubulin complex"/>
    <property type="evidence" value="ECO:0000318"/>
    <property type="project" value="GO_Central"/>
</dbReference>
<dbReference type="GO" id="GO:0000931">
    <property type="term" value="C:gamma-tubulin ring complex"/>
    <property type="evidence" value="ECO:0000314"/>
    <property type="project" value="PomBase"/>
</dbReference>
<dbReference type="GO" id="GO:0008275">
    <property type="term" value="C:gamma-tubulin small complex"/>
    <property type="evidence" value="ECO:0000314"/>
    <property type="project" value="PomBase"/>
</dbReference>
<dbReference type="GO" id="GO:0061496">
    <property type="term" value="C:half bridge of mitotic spindle pole body"/>
    <property type="evidence" value="ECO:0000314"/>
    <property type="project" value="PomBase"/>
</dbReference>
<dbReference type="GO" id="GO:0061497">
    <property type="term" value="C:inner plaque of mitotic spindle pole body"/>
    <property type="evidence" value="ECO:0000314"/>
    <property type="project" value="PomBase"/>
</dbReference>
<dbReference type="GO" id="GO:0031021">
    <property type="term" value="C:interphase microtubule organizing center"/>
    <property type="evidence" value="ECO:0000314"/>
    <property type="project" value="PomBase"/>
</dbReference>
<dbReference type="GO" id="GO:0035974">
    <property type="term" value="C:meiotic spindle pole body"/>
    <property type="evidence" value="ECO:0000314"/>
    <property type="project" value="PomBase"/>
</dbReference>
<dbReference type="GO" id="GO:0005874">
    <property type="term" value="C:microtubule"/>
    <property type="evidence" value="ECO:0007669"/>
    <property type="project" value="UniProtKB-KW"/>
</dbReference>
<dbReference type="GO" id="GO:0044732">
    <property type="term" value="C:mitotic spindle pole body"/>
    <property type="evidence" value="ECO:0000314"/>
    <property type="project" value="PomBase"/>
</dbReference>
<dbReference type="GO" id="GO:0005634">
    <property type="term" value="C:nucleus"/>
    <property type="evidence" value="ECO:0007005"/>
    <property type="project" value="PomBase"/>
</dbReference>
<dbReference type="GO" id="GO:0071957">
    <property type="term" value="C:old mitotic spindle pole body"/>
    <property type="evidence" value="ECO:0000314"/>
    <property type="project" value="PomBase"/>
</dbReference>
<dbReference type="GO" id="GO:0000922">
    <property type="term" value="C:spindle pole"/>
    <property type="evidence" value="ECO:0007669"/>
    <property type="project" value="InterPro"/>
</dbReference>
<dbReference type="GO" id="GO:0043015">
    <property type="term" value="F:gamma-tubulin binding"/>
    <property type="evidence" value="ECO:0000318"/>
    <property type="project" value="GO_Central"/>
</dbReference>
<dbReference type="GO" id="GO:1990734">
    <property type="term" value="P:astral microtubule anchoring at mitotic spindle pole body"/>
    <property type="evidence" value="ECO:0000315"/>
    <property type="project" value="PomBase"/>
</dbReference>
<dbReference type="GO" id="GO:0051301">
    <property type="term" value="P:cell division"/>
    <property type="evidence" value="ECO:0007669"/>
    <property type="project" value="UniProtKB-KW"/>
</dbReference>
<dbReference type="GO" id="GO:0031122">
    <property type="term" value="P:cytoplasmic microtubule organization"/>
    <property type="evidence" value="ECO:0000315"/>
    <property type="project" value="PomBase"/>
</dbReference>
<dbReference type="GO" id="GO:0051321">
    <property type="term" value="P:meiotic cell cycle"/>
    <property type="evidence" value="ECO:0000318"/>
    <property type="project" value="GO_Central"/>
</dbReference>
<dbReference type="GO" id="GO:0007020">
    <property type="term" value="P:microtubule nucleation"/>
    <property type="evidence" value="ECO:0000305"/>
    <property type="project" value="PomBase"/>
</dbReference>
<dbReference type="GO" id="GO:0000278">
    <property type="term" value="P:mitotic cell cycle"/>
    <property type="evidence" value="ECO:0000318"/>
    <property type="project" value="GO_Central"/>
</dbReference>
<dbReference type="GO" id="GO:0090307">
    <property type="term" value="P:mitotic spindle assembly"/>
    <property type="evidence" value="ECO:0000315"/>
    <property type="project" value="PomBase"/>
</dbReference>
<dbReference type="GO" id="GO:0098863">
    <property type="term" value="P:nuclear migration by microtubule mediated pushing forces"/>
    <property type="evidence" value="ECO:0000315"/>
    <property type="project" value="PomBase"/>
</dbReference>
<dbReference type="GO" id="GO:0051225">
    <property type="term" value="P:spindle assembly"/>
    <property type="evidence" value="ECO:0000318"/>
    <property type="project" value="GO_Central"/>
</dbReference>
<dbReference type="FunFam" id="1.20.120.1900:FF:000011">
    <property type="entry name" value="Spindle pole body component"/>
    <property type="match status" value="1"/>
</dbReference>
<dbReference type="Gene3D" id="1.20.120.1900">
    <property type="entry name" value="Gamma-tubulin complex, C-terminal domain"/>
    <property type="match status" value="1"/>
</dbReference>
<dbReference type="InterPro" id="IPR007259">
    <property type="entry name" value="GCP"/>
</dbReference>
<dbReference type="InterPro" id="IPR040457">
    <property type="entry name" value="GCP_C"/>
</dbReference>
<dbReference type="InterPro" id="IPR042241">
    <property type="entry name" value="GCP_C_sf"/>
</dbReference>
<dbReference type="InterPro" id="IPR041470">
    <property type="entry name" value="GCP_N"/>
</dbReference>
<dbReference type="PANTHER" id="PTHR19302">
    <property type="entry name" value="GAMMA TUBULIN COMPLEX PROTEIN"/>
    <property type="match status" value="1"/>
</dbReference>
<dbReference type="PANTHER" id="PTHR19302:SF13">
    <property type="entry name" value="GAMMA-TUBULIN COMPLEX COMPONENT 2"/>
    <property type="match status" value="1"/>
</dbReference>
<dbReference type="Pfam" id="PF04130">
    <property type="entry name" value="GCP_C_terminal"/>
    <property type="match status" value="1"/>
</dbReference>
<dbReference type="Pfam" id="PF17681">
    <property type="entry name" value="GCP_N_terminal"/>
    <property type="match status" value="1"/>
</dbReference>
<feature type="chain" id="PRO_0000078132" description="Spindle pole body component alp4">
    <location>
        <begin position="1"/>
        <end position="784"/>
    </location>
</feature>
<comment type="function">
    <text evidence="1 2">Component of the gamma tubule complex that is required for the regulation of both interphase microtubules and mitotic bipolar spindles.</text>
</comment>
<comment type="subunit">
    <text evidence="1 3 5">Part of the gamma-tubulin complex (PubMed:11080156). Interacts with mcp6 (PubMed:16111942). Interacts with mto1 (PubMed:19001497). Interacts with mto2 (PubMed:19001497).</text>
</comment>
<comment type="interaction">
    <interactant intactId="EBI-1562228">
        <id>Q9Y705</id>
    </interactant>
    <interactant intactId="EBI-9549762">
        <id>Q9USQ2</id>
        <label>alp6</label>
    </interactant>
    <organismsDiffer>false</organismsDiffer>
    <experiments>3</experiments>
</comment>
<comment type="interaction">
    <interactant intactId="EBI-1562228">
        <id>Q9Y705</id>
    </interactant>
    <interactant intactId="EBI-1562149">
        <id>Q10336</id>
        <label>mcp6</label>
    </interactant>
    <organismsDiffer>false</organismsDiffer>
    <experiments>2</experiments>
</comment>
<comment type="subcellular location">
    <subcellularLocation>
        <location evidence="1 3 4">Cytoplasm</location>
        <location evidence="1 3 4">Cytoskeleton</location>
        <location evidence="1 3 4">Microtubule organizing center</location>
        <location evidence="1 3 4">Spindle pole body</location>
    </subcellularLocation>
    <text>Localizes to the SPB and also to the equatorial MTOC.</text>
</comment>
<comment type="similarity">
    <text evidence="6">Belongs to the TUBGCP family.</text>
</comment>
<proteinExistence type="evidence at protein level"/>
<keyword id="KW-0131">Cell cycle</keyword>
<keyword id="KW-0132">Cell division</keyword>
<keyword id="KW-0963">Cytoplasm</keyword>
<keyword id="KW-0206">Cytoskeleton</keyword>
<keyword id="KW-0493">Microtubule</keyword>
<keyword id="KW-0498">Mitosis</keyword>
<keyword id="KW-1185">Reference proteome</keyword>
<name>SPC97_SCHPO</name>
<organism>
    <name type="scientific">Schizosaccharomyces pombe (strain 972 / ATCC 24843)</name>
    <name type="common">Fission yeast</name>
    <dbReference type="NCBI Taxonomy" id="284812"/>
    <lineage>
        <taxon>Eukaryota</taxon>
        <taxon>Fungi</taxon>
        <taxon>Dikarya</taxon>
        <taxon>Ascomycota</taxon>
        <taxon>Taphrinomycotina</taxon>
        <taxon>Schizosaccharomycetes</taxon>
        <taxon>Schizosaccharomycetales</taxon>
        <taxon>Schizosaccharomycetaceae</taxon>
        <taxon>Schizosaccharomyces</taxon>
    </lineage>
</organism>
<protein>
    <recommendedName>
        <fullName>Spindle pole body component alp4</fullName>
    </recommendedName>
    <alternativeName>
        <fullName>Altered polarity protein 4</fullName>
    </alternativeName>
</protein>
<sequence>MVRSISSVLAKEESENGSPIPALEEGSVYHVSLKSEGVSPFSDRIQLNYLYDGKTFSDPSNLNIHQQEACLINELLNAFMGMEGVFVHLQDMKASSEFETIIMPPSFYILPGFDLGIKDIASEMLEMGSHYLSITAFIESRSHFEYGFVNHALCAALRKFVMDYVVLIMQCENQSRIDPNFSLQTLRLYTLPTSRSLRQVYLILRDLLLSMEKNASSSDDLGLSNIDDLLEQLNEGNDISHVVNATRSKKKVCKGGQVISFLTESLTKYAGDPVARKILTYLLREASRPYTKMLNEWIHLGLVNDPYDEFMIKIHKGITSMQLDEDYTDEYWEKRYVIREDQVPPQLLDLQNKVLFAGKYLNVVLECRKGVNNLASLNAKDDTQNQLLWPSTFDDDNFTLNIMNAYVYANESLLQLLQSSQSLYAHLYSLKHYFFLDQSDFFTTFLDNAQHELRKPAKYISITKLQSQLDLALRQPGTITATDPHKEYVTVEVNQTSLIDWLMHIVSISGLEEGTSSQGNEVWNESITKQADVGNETRNFESEHNRSTQGTSKVGSDKDINGFETMQLCYKVPFPLSLILSRKAIIRYQLLFRYFLLLRHVEMQLENSWVQHSKNSAWRLNSSNAKIEQWKRNSWLLRTRMLSFVQKIIYYTTSEVIETHWGKFMGELENARTVDNLMQEHIDFLDTCLKECMLTNSRLLKVQSKLLNTCAMFASYTSTFTRSLYLLENSEESFDEGRMDKMEEILRRYEDSFSRHLKSLVNACNYFASTETAALLSLVMKLTG</sequence>
<reference key="1">
    <citation type="journal article" date="2000" name="EMBO J.">
        <title>The fission yeast gamma-tubulin complex is required in G(1) phase and is a component of the spindle assembly checkpoint.</title>
        <authorList>
            <person name="Vardy L."/>
            <person name="Toda T."/>
        </authorList>
    </citation>
    <scope>NUCLEOTIDE SEQUENCE [GENOMIC DNA]</scope>
    <scope>FUNCTION</scope>
    <scope>SUBUNIT</scope>
    <scope>SUBCELLULAR LOCATION</scope>
    <source>
        <strain>972 / ATCC 24843</strain>
    </source>
</reference>
<reference key="2">
    <citation type="journal article" date="2002" name="Nature">
        <title>The genome sequence of Schizosaccharomyces pombe.</title>
        <authorList>
            <person name="Wood V."/>
            <person name="Gwilliam R."/>
            <person name="Rajandream M.A."/>
            <person name="Lyne M.H."/>
            <person name="Lyne R."/>
            <person name="Stewart A."/>
            <person name="Sgouros J.G."/>
            <person name="Peat N."/>
            <person name="Hayles J."/>
            <person name="Baker S.G."/>
            <person name="Basham D."/>
            <person name="Bowman S."/>
            <person name="Brooks K."/>
            <person name="Brown D."/>
            <person name="Brown S."/>
            <person name="Chillingworth T."/>
            <person name="Churcher C.M."/>
            <person name="Collins M."/>
            <person name="Connor R."/>
            <person name="Cronin A."/>
            <person name="Davis P."/>
            <person name="Feltwell T."/>
            <person name="Fraser A."/>
            <person name="Gentles S."/>
            <person name="Goble A."/>
            <person name="Hamlin N."/>
            <person name="Harris D.E."/>
            <person name="Hidalgo J."/>
            <person name="Hodgson G."/>
            <person name="Holroyd S."/>
            <person name="Hornsby T."/>
            <person name="Howarth S."/>
            <person name="Huckle E.J."/>
            <person name="Hunt S."/>
            <person name="Jagels K."/>
            <person name="James K.D."/>
            <person name="Jones L."/>
            <person name="Jones M."/>
            <person name="Leather S."/>
            <person name="McDonald S."/>
            <person name="McLean J."/>
            <person name="Mooney P."/>
            <person name="Moule S."/>
            <person name="Mungall K.L."/>
            <person name="Murphy L.D."/>
            <person name="Niblett D."/>
            <person name="Odell C."/>
            <person name="Oliver K."/>
            <person name="O'Neil S."/>
            <person name="Pearson D."/>
            <person name="Quail M.A."/>
            <person name="Rabbinowitsch E."/>
            <person name="Rutherford K.M."/>
            <person name="Rutter S."/>
            <person name="Saunders D."/>
            <person name="Seeger K."/>
            <person name="Sharp S."/>
            <person name="Skelton J."/>
            <person name="Simmonds M.N."/>
            <person name="Squares R."/>
            <person name="Squares S."/>
            <person name="Stevens K."/>
            <person name="Taylor K."/>
            <person name="Taylor R.G."/>
            <person name="Tivey A."/>
            <person name="Walsh S.V."/>
            <person name="Warren T."/>
            <person name="Whitehead S."/>
            <person name="Woodward J.R."/>
            <person name="Volckaert G."/>
            <person name="Aert R."/>
            <person name="Robben J."/>
            <person name="Grymonprez B."/>
            <person name="Weltjens I."/>
            <person name="Vanstreels E."/>
            <person name="Rieger M."/>
            <person name="Schaefer M."/>
            <person name="Mueller-Auer S."/>
            <person name="Gabel C."/>
            <person name="Fuchs M."/>
            <person name="Duesterhoeft A."/>
            <person name="Fritzc C."/>
            <person name="Holzer E."/>
            <person name="Moestl D."/>
            <person name="Hilbert H."/>
            <person name="Borzym K."/>
            <person name="Langer I."/>
            <person name="Beck A."/>
            <person name="Lehrach H."/>
            <person name="Reinhardt R."/>
            <person name="Pohl T.M."/>
            <person name="Eger P."/>
            <person name="Zimmermann W."/>
            <person name="Wedler H."/>
            <person name="Wambutt R."/>
            <person name="Purnelle B."/>
            <person name="Goffeau A."/>
            <person name="Cadieu E."/>
            <person name="Dreano S."/>
            <person name="Gloux S."/>
            <person name="Lelaure V."/>
            <person name="Mottier S."/>
            <person name="Galibert F."/>
            <person name="Aves S.J."/>
            <person name="Xiang Z."/>
            <person name="Hunt C."/>
            <person name="Moore K."/>
            <person name="Hurst S.M."/>
            <person name="Lucas M."/>
            <person name="Rochet M."/>
            <person name="Gaillardin C."/>
            <person name="Tallada V.A."/>
            <person name="Garzon A."/>
            <person name="Thode G."/>
            <person name="Daga R.R."/>
            <person name="Cruzado L."/>
            <person name="Jimenez J."/>
            <person name="Sanchez M."/>
            <person name="del Rey F."/>
            <person name="Benito J."/>
            <person name="Dominguez A."/>
            <person name="Revuelta J.L."/>
            <person name="Moreno S."/>
            <person name="Armstrong J."/>
            <person name="Forsburg S.L."/>
            <person name="Cerutti L."/>
            <person name="Lowe T."/>
            <person name="McCombie W.R."/>
            <person name="Paulsen I."/>
            <person name="Potashkin J."/>
            <person name="Shpakovski G.V."/>
            <person name="Ussery D."/>
            <person name="Barrell B.G."/>
            <person name="Nurse P."/>
        </authorList>
    </citation>
    <scope>NUCLEOTIDE SEQUENCE [LARGE SCALE GENOMIC DNA]</scope>
    <source>
        <strain>972 / ATCC 24843</strain>
    </source>
</reference>
<reference key="3">
    <citation type="journal article" date="2002" name="Genes Cells">
        <title>The gamma-tubulin complex protein Alp4 provides a link between the metaphase checkpoint and cytokinesis in fission yeast.</title>
        <authorList>
            <person name="Vardy L."/>
            <person name="Fujita A."/>
            <person name="Toda T."/>
        </authorList>
    </citation>
    <scope>FUNCTION</scope>
</reference>
<reference key="4">
    <citation type="journal article" date="2005" name="Curr. Biol.">
        <title>Hrs1p/Mcp6p on the meiotic SPB organizes astral microtubule arrays for oscillatory nuclear movement.</title>
        <authorList>
            <person name="Tanaka K."/>
            <person name="Kohda T."/>
            <person name="Yamashita A."/>
            <person name="Nonaka N."/>
            <person name="Yamamoto M."/>
        </authorList>
    </citation>
    <scope>INTERACTION WITH MCP6</scope>
    <scope>SUBCELLULAR LOCATION</scope>
</reference>
<reference key="5">
    <citation type="journal article" date="2006" name="Nat. Biotechnol.">
        <title>ORFeome cloning and global analysis of protein localization in the fission yeast Schizosaccharomyces pombe.</title>
        <authorList>
            <person name="Matsuyama A."/>
            <person name="Arai R."/>
            <person name="Yashiroda Y."/>
            <person name="Shirai A."/>
            <person name="Kamata A."/>
            <person name="Sekido S."/>
            <person name="Kobayashi Y."/>
            <person name="Hashimoto A."/>
            <person name="Hamamoto M."/>
            <person name="Hiraoka Y."/>
            <person name="Horinouchi S."/>
            <person name="Yoshida M."/>
        </authorList>
    </citation>
    <scope>SUBCELLULAR LOCATION [LARGE SCALE ANALYSIS]</scope>
</reference>
<reference key="6">
    <citation type="journal article" date="2008" name="J. Cell Sci.">
        <title>Two distinct regions of Mto1 are required for normal microtubule nucleation and efficient association with the gamma-tubulin complex in vivo.</title>
        <authorList>
            <person name="Samejima I."/>
            <person name="Miller V.J."/>
            <person name="Groocock L.M."/>
            <person name="Sawin K.E."/>
        </authorList>
    </citation>
    <scope>INTERACTION WITH MTO1 AND MTO2</scope>
</reference>
<accession>Q9Y705</accession>
<evidence type="ECO:0000269" key="1">
    <source>
    </source>
</evidence>
<evidence type="ECO:0000269" key="2">
    <source>
    </source>
</evidence>
<evidence type="ECO:0000269" key="3">
    <source>
    </source>
</evidence>
<evidence type="ECO:0000269" key="4">
    <source>
    </source>
</evidence>
<evidence type="ECO:0000269" key="5">
    <source>
    </source>
</evidence>
<evidence type="ECO:0000305" key="6"/>